<dbReference type="EC" id="5.4.99.62" evidence="1"/>
<dbReference type="EMBL" id="AL766843">
    <property type="protein sequence ID" value="CAD45761.1"/>
    <property type="molecule type" value="Genomic_DNA"/>
</dbReference>
<dbReference type="RefSeq" id="WP_000750742.1">
    <property type="nucleotide sequence ID" value="NC_004368.1"/>
</dbReference>
<dbReference type="SMR" id="Q8E7N8"/>
<dbReference type="KEGG" id="san:gbs0116"/>
<dbReference type="eggNOG" id="COG1869">
    <property type="taxonomic scope" value="Bacteria"/>
</dbReference>
<dbReference type="HOGENOM" id="CLU_135498_0_0_9"/>
<dbReference type="UniPathway" id="UPA00916">
    <property type="reaction ID" value="UER00888"/>
</dbReference>
<dbReference type="Proteomes" id="UP000000823">
    <property type="component" value="Chromosome"/>
</dbReference>
<dbReference type="GO" id="GO:0005829">
    <property type="term" value="C:cytosol"/>
    <property type="evidence" value="ECO:0007669"/>
    <property type="project" value="TreeGrafter"/>
</dbReference>
<dbReference type="GO" id="GO:0062193">
    <property type="term" value="F:D-ribose pyranase activity"/>
    <property type="evidence" value="ECO:0007669"/>
    <property type="project" value="UniProtKB-EC"/>
</dbReference>
<dbReference type="GO" id="GO:0016872">
    <property type="term" value="F:intramolecular lyase activity"/>
    <property type="evidence" value="ECO:0007669"/>
    <property type="project" value="UniProtKB-UniRule"/>
</dbReference>
<dbReference type="GO" id="GO:0048029">
    <property type="term" value="F:monosaccharide binding"/>
    <property type="evidence" value="ECO:0007669"/>
    <property type="project" value="InterPro"/>
</dbReference>
<dbReference type="GO" id="GO:0019303">
    <property type="term" value="P:D-ribose catabolic process"/>
    <property type="evidence" value="ECO:0007669"/>
    <property type="project" value="UniProtKB-UniRule"/>
</dbReference>
<dbReference type="Gene3D" id="3.40.1650.10">
    <property type="entry name" value="RbsD-like domain"/>
    <property type="match status" value="1"/>
</dbReference>
<dbReference type="HAMAP" id="MF_01661">
    <property type="entry name" value="D_rib_pyranase"/>
    <property type="match status" value="1"/>
</dbReference>
<dbReference type="InterPro" id="IPR023064">
    <property type="entry name" value="D-ribose_pyranase"/>
</dbReference>
<dbReference type="InterPro" id="IPR023750">
    <property type="entry name" value="RbsD-like_sf"/>
</dbReference>
<dbReference type="InterPro" id="IPR007721">
    <property type="entry name" value="RbsD_FucU"/>
</dbReference>
<dbReference type="NCBIfam" id="NF008761">
    <property type="entry name" value="PRK11797.1"/>
    <property type="match status" value="1"/>
</dbReference>
<dbReference type="PANTHER" id="PTHR37831">
    <property type="entry name" value="D-RIBOSE PYRANASE"/>
    <property type="match status" value="1"/>
</dbReference>
<dbReference type="PANTHER" id="PTHR37831:SF1">
    <property type="entry name" value="D-RIBOSE PYRANASE"/>
    <property type="match status" value="1"/>
</dbReference>
<dbReference type="Pfam" id="PF05025">
    <property type="entry name" value="RbsD_FucU"/>
    <property type="match status" value="1"/>
</dbReference>
<dbReference type="SUPFAM" id="SSF102546">
    <property type="entry name" value="RbsD-like"/>
    <property type="match status" value="1"/>
</dbReference>
<comment type="function">
    <text evidence="1">Catalyzes the interconversion of beta-pyran and beta-furan forms of D-ribose.</text>
</comment>
<comment type="catalytic activity">
    <reaction evidence="1">
        <text>beta-D-ribopyranose = beta-D-ribofuranose</text>
        <dbReference type="Rhea" id="RHEA:25432"/>
        <dbReference type="ChEBI" id="CHEBI:27476"/>
        <dbReference type="ChEBI" id="CHEBI:47002"/>
        <dbReference type="EC" id="5.4.99.62"/>
    </reaction>
</comment>
<comment type="pathway">
    <text evidence="1">Carbohydrate metabolism; D-ribose degradation; D-ribose 5-phosphate from beta-D-ribopyranose: step 1/2.</text>
</comment>
<comment type="subunit">
    <text evidence="1">Homodecamer.</text>
</comment>
<comment type="subcellular location">
    <subcellularLocation>
        <location evidence="1">Cytoplasm</location>
    </subcellularLocation>
</comment>
<comment type="similarity">
    <text evidence="1">Belongs to the RbsD / FucU family. RbsD subfamily.</text>
</comment>
<reference key="1">
    <citation type="journal article" date="2002" name="Mol. Microbiol.">
        <title>Genome sequence of Streptococcus agalactiae, a pathogen causing invasive neonatal disease.</title>
        <authorList>
            <person name="Glaser P."/>
            <person name="Rusniok C."/>
            <person name="Buchrieser C."/>
            <person name="Chevalier F."/>
            <person name="Frangeul L."/>
            <person name="Msadek T."/>
            <person name="Zouine M."/>
            <person name="Couve E."/>
            <person name="Lalioui L."/>
            <person name="Poyart C."/>
            <person name="Trieu-Cuot P."/>
            <person name="Kunst F."/>
        </authorList>
    </citation>
    <scope>NUCLEOTIDE SEQUENCE [LARGE SCALE GENOMIC DNA]</scope>
    <source>
        <strain>NEM316</strain>
    </source>
</reference>
<sequence>MKKTGILNSHLAKLADDLGHTDRVCIGDLGLPVPNGIPKIDLSLTSGIPSFQEVLDIYLENILVEKVILAEEIKEANPDQLSRLLAKLDNSVSIEYVSHDHLKQMTQDVKAVIRTGENTPYSNIILQSGVII</sequence>
<organism>
    <name type="scientific">Streptococcus agalactiae serotype III (strain NEM316)</name>
    <dbReference type="NCBI Taxonomy" id="211110"/>
    <lineage>
        <taxon>Bacteria</taxon>
        <taxon>Bacillati</taxon>
        <taxon>Bacillota</taxon>
        <taxon>Bacilli</taxon>
        <taxon>Lactobacillales</taxon>
        <taxon>Streptococcaceae</taxon>
        <taxon>Streptococcus</taxon>
    </lineage>
</organism>
<feature type="chain" id="PRO_0000346280" description="D-ribose pyranase">
    <location>
        <begin position="1"/>
        <end position="132"/>
    </location>
</feature>
<feature type="active site" description="Proton donor" evidence="1">
    <location>
        <position position="20"/>
    </location>
</feature>
<feature type="binding site" evidence="1">
    <location>
        <position position="28"/>
    </location>
    <ligand>
        <name>substrate</name>
    </ligand>
</feature>
<feature type="binding site" evidence="1">
    <location>
        <position position="99"/>
    </location>
    <ligand>
        <name>substrate</name>
    </ligand>
</feature>
<feature type="binding site" evidence="1">
    <location>
        <begin position="121"/>
        <end position="123"/>
    </location>
    <ligand>
        <name>substrate</name>
    </ligand>
</feature>
<gene>
    <name evidence="1" type="primary">rbsD</name>
    <name type="ordered locus">gbs0116</name>
</gene>
<keyword id="KW-0119">Carbohydrate metabolism</keyword>
<keyword id="KW-0963">Cytoplasm</keyword>
<keyword id="KW-0413">Isomerase</keyword>
<accession>Q8E7N8</accession>
<evidence type="ECO:0000255" key="1">
    <source>
        <dbReference type="HAMAP-Rule" id="MF_01661"/>
    </source>
</evidence>
<name>RBSD_STRA3</name>
<protein>
    <recommendedName>
        <fullName evidence="1">D-ribose pyranase</fullName>
        <ecNumber evidence="1">5.4.99.62</ecNumber>
    </recommendedName>
</protein>
<proteinExistence type="inferred from homology"/>